<organism>
    <name type="scientific">Ovis aries</name>
    <name type="common">Sheep</name>
    <dbReference type="NCBI Taxonomy" id="9940"/>
    <lineage>
        <taxon>Eukaryota</taxon>
        <taxon>Metazoa</taxon>
        <taxon>Chordata</taxon>
        <taxon>Craniata</taxon>
        <taxon>Vertebrata</taxon>
        <taxon>Euteleostomi</taxon>
        <taxon>Mammalia</taxon>
        <taxon>Eutheria</taxon>
        <taxon>Laurasiatheria</taxon>
        <taxon>Artiodactyla</taxon>
        <taxon>Ruminantia</taxon>
        <taxon>Pecora</taxon>
        <taxon>Bovidae</taxon>
        <taxon>Caprinae</taxon>
        <taxon>Ovis</taxon>
    </lineage>
</organism>
<protein>
    <recommendedName>
        <fullName evidence="8">Solute carrier family 2, facilitated glucose transporter member 3</fullName>
    </recommendedName>
    <alternativeName>
        <fullName evidence="7">Glucose transporter type 3, brain</fullName>
        <shortName evidence="7">GLUT-3</shortName>
    </alternativeName>
</protein>
<gene>
    <name evidence="1" type="primary">SLC2A3</name>
    <name evidence="7" type="synonym">GLUT3</name>
</gene>
<sequence>MGTTKVTTPLIFAISIATIGSFQFGYNTGVINAPEAIIKDFLNYTLEERSETPPSSVLLTSLWSLSVAIFSVGGMIGSFSVGLFVNRFGRRNSMLIVNLLAIAGGCLMGFCKIAESVEMLILGRLIIGLFCGLCTGFVPMYIGEISPTALRGAFGTLNQLGIVIGILVAQIFGLKVILGTEDLWPLLLGFTILPAIIQCAALPFCPESPRFLLINRKEEEKAKEILQRLWGTEDVAQDIQEMKDESMRMSQEKQVTVLELFRAPNYRQPIIISIMLQLSQQLSGINAVFYYSTGIFKDAGVQEPVYATIGAGVVNTIFTVVSVFLVERAGRRTLHLIGLGGMAFCSILMTISLLLKDNYSWMSFICIGAILVFVAFFEIGPGPIPWFIVAELFGQGPRPAAMAVAGCSNWTSNFLVGLLFPSATFYLGAYVFIVFTVFLVIFWVFTFFKVPETRGRTFEEITRAFEGQVQTGTRGEKGPIMEMNSIQPTKDTNA</sequence>
<reference key="1">
    <citation type="journal article" date="1995" name="Biochem. Mol. Biol. Int.">
        <title>Isolation of cDNAs and tissue specific expression of ovine glucose transporters.</title>
        <authorList>
            <person name="Bennett B.L."/>
            <person name="Prosser C.G."/>
            <person name="Grigor M.R."/>
        </authorList>
    </citation>
    <scope>NUCLEOTIDE SEQUENCE [MRNA]</scope>
    <source>
        <strain>Coopworth</strain>
    </source>
</reference>
<reference key="2">
    <citation type="journal article" date="1997" name="Placenta">
        <title>Ovine glucose transporter-1 and -3: cDNA partial sequences and developmental gene expression in the placenta.</title>
        <authorList>
            <person name="Currie M.J."/>
            <person name="Bassett N.S."/>
            <person name="Gluckman P.D."/>
        </authorList>
    </citation>
    <scope>NUCLEOTIDE SEQUENCE [MRNA] OF 88-248</scope>
    <scope>TISSUE SPECIFICITY</scope>
    <source>
        <tissue>Placenta</tissue>
    </source>
</reference>
<feature type="chain" id="PRO_0000050359" description="Solute carrier family 2, facilitated glucose transporter member 3">
    <location>
        <begin position="1"/>
        <end position="494"/>
    </location>
</feature>
<feature type="topological domain" description="Cytoplasmic" evidence="1">
    <location>
        <begin position="1"/>
        <end position="10"/>
    </location>
</feature>
<feature type="transmembrane region" description="Helical; Name=1" evidence="1 4">
    <location>
        <begin position="11"/>
        <end position="32"/>
    </location>
</feature>
<feature type="topological domain" description="Extracellular" evidence="1">
    <location>
        <begin position="33"/>
        <end position="64"/>
    </location>
</feature>
<feature type="transmembrane region" description="Helical; Name=2" evidence="1 4">
    <location>
        <begin position="65"/>
        <end position="85"/>
    </location>
</feature>
<feature type="topological domain" description="Cytoplasmic" evidence="1">
    <location>
        <begin position="86"/>
        <end position="90"/>
    </location>
</feature>
<feature type="transmembrane region" description="Helical; Name=3" evidence="1 4">
    <location>
        <begin position="91"/>
        <end position="111"/>
    </location>
</feature>
<feature type="topological domain" description="Extracellular" evidence="1">
    <location>
        <begin position="112"/>
        <end position="118"/>
    </location>
</feature>
<feature type="transmembrane region" description="Helical; Name=4" evidence="1 4">
    <location>
        <begin position="119"/>
        <end position="142"/>
    </location>
</feature>
<feature type="topological domain" description="Cytoplasmic" evidence="1">
    <location>
        <begin position="143"/>
        <end position="153"/>
    </location>
</feature>
<feature type="transmembrane region" description="Helical; Name=5" evidence="1 4">
    <location>
        <begin position="154"/>
        <end position="174"/>
    </location>
</feature>
<feature type="topological domain" description="Extracellular" evidence="1">
    <location>
        <begin position="175"/>
        <end position="183"/>
    </location>
</feature>
<feature type="transmembrane region" description="Helical; Name=6" evidence="1 4">
    <location>
        <begin position="184"/>
        <end position="204"/>
    </location>
</feature>
<feature type="topological domain" description="Cytoplasmic" evidence="1">
    <location>
        <begin position="205"/>
        <end position="269"/>
    </location>
</feature>
<feature type="transmembrane region" description="Helical; Name=7" evidence="1 4">
    <location>
        <begin position="270"/>
        <end position="290"/>
    </location>
</feature>
<feature type="topological domain" description="Extracellular" evidence="1">
    <location>
        <begin position="291"/>
        <end position="304"/>
    </location>
</feature>
<feature type="transmembrane region" description="Helical; Name=8" evidence="1 4">
    <location>
        <begin position="305"/>
        <end position="325"/>
    </location>
</feature>
<feature type="topological domain" description="Cytoplasmic" evidence="1">
    <location>
        <begin position="326"/>
        <end position="331"/>
    </location>
</feature>
<feature type="transmembrane region" description="Helical; Name=9" evidence="1 4">
    <location>
        <begin position="332"/>
        <end position="352"/>
    </location>
</feature>
<feature type="topological domain" description="Extracellular" evidence="1">
    <location>
        <begin position="353"/>
        <end position="363"/>
    </location>
</feature>
<feature type="transmembrane region" description="Helical; Name=10" evidence="1 4">
    <location>
        <begin position="364"/>
        <end position="389"/>
    </location>
</feature>
<feature type="topological domain" description="Cytoplasmic" evidence="1">
    <location>
        <begin position="390"/>
        <end position="399"/>
    </location>
</feature>
<feature type="transmembrane region" description="Helical; Name=11" evidence="1 4">
    <location>
        <begin position="400"/>
        <end position="420"/>
    </location>
</feature>
<feature type="topological domain" description="Extracellular" evidence="1">
    <location>
        <begin position="421"/>
        <end position="429"/>
    </location>
</feature>
<feature type="transmembrane region" description="Helical; Name=12" evidence="1 4">
    <location>
        <begin position="430"/>
        <end position="450"/>
    </location>
</feature>
<feature type="topological domain" description="Cytoplasmic" evidence="1">
    <location>
        <begin position="451"/>
        <end position="494"/>
    </location>
</feature>
<feature type="region of interest" description="Important for selectivity against fructose" evidence="1">
    <location>
        <begin position="277"/>
        <end position="279"/>
    </location>
</feature>
<feature type="region of interest" description="Disordered" evidence="5">
    <location>
        <begin position="473"/>
        <end position="494"/>
    </location>
</feature>
<feature type="compositionally biased region" description="Polar residues" evidence="5">
    <location>
        <begin position="484"/>
        <end position="494"/>
    </location>
</feature>
<feature type="binding site" evidence="1">
    <location>
        <position position="159"/>
    </location>
    <ligand>
        <name>D-glucose</name>
        <dbReference type="ChEBI" id="CHEBI:4167"/>
    </ligand>
</feature>
<feature type="binding site" evidence="1">
    <location>
        <begin position="280"/>
        <end position="281"/>
    </location>
    <ligand>
        <name>D-glucose</name>
        <dbReference type="ChEBI" id="CHEBI:4167"/>
    </ligand>
</feature>
<feature type="binding site" evidence="1">
    <location>
        <position position="286"/>
    </location>
    <ligand>
        <name>D-glucose</name>
        <dbReference type="ChEBI" id="CHEBI:4167"/>
    </ligand>
</feature>
<feature type="binding site" evidence="1">
    <location>
        <position position="315"/>
    </location>
    <ligand>
        <name>D-glucose</name>
        <dbReference type="ChEBI" id="CHEBI:4167"/>
    </ligand>
</feature>
<feature type="binding site" evidence="1">
    <location>
        <position position="378"/>
    </location>
    <ligand>
        <name>D-glucose</name>
        <dbReference type="ChEBI" id="CHEBI:4167"/>
    </ligand>
</feature>
<feature type="binding site" evidence="1">
    <location>
        <position position="386"/>
    </location>
    <ligand>
        <name>D-glucose</name>
        <dbReference type="ChEBI" id="CHEBI:4167"/>
    </ligand>
</feature>
<feature type="modified residue" description="Phosphothreonine" evidence="2">
    <location>
        <position position="232"/>
    </location>
</feature>
<feature type="modified residue" description="Phosphoserine" evidence="3">
    <location>
        <position position="485"/>
    </location>
</feature>
<feature type="modified residue" description="Phosphothreonine" evidence="3">
    <location>
        <position position="492"/>
    </location>
</feature>
<feature type="glycosylation site" description="N-linked (GlcNAc...) asparagine" evidence="4">
    <location>
        <position position="43"/>
    </location>
</feature>
<accession>P47843</accession>
<keyword id="KW-1003">Cell membrane</keyword>
<keyword id="KW-0966">Cell projection</keyword>
<keyword id="KW-0325">Glycoprotein</keyword>
<keyword id="KW-0472">Membrane</keyword>
<keyword id="KW-0597">Phosphoprotein</keyword>
<keyword id="KW-1185">Reference proteome</keyword>
<keyword id="KW-0762">Sugar transport</keyword>
<keyword id="KW-0812">Transmembrane</keyword>
<keyword id="KW-1133">Transmembrane helix</keyword>
<keyword id="KW-0813">Transport</keyword>
<evidence type="ECO:0000250" key="1">
    <source>
        <dbReference type="UniProtKB" id="P11169"/>
    </source>
</evidence>
<evidence type="ECO:0000250" key="2">
    <source>
        <dbReference type="UniProtKB" id="P32037"/>
    </source>
</evidence>
<evidence type="ECO:0000250" key="3">
    <source>
        <dbReference type="UniProtKB" id="Q07647"/>
    </source>
</evidence>
<evidence type="ECO:0000255" key="4"/>
<evidence type="ECO:0000256" key="5">
    <source>
        <dbReference type="SAM" id="MobiDB-lite"/>
    </source>
</evidence>
<evidence type="ECO:0000269" key="6">
    <source>
    </source>
</evidence>
<evidence type="ECO:0000303" key="7">
    <source>
    </source>
</evidence>
<evidence type="ECO:0000305" key="8"/>
<name>GTR3_SHEEP</name>
<dbReference type="EMBL" id="L39214">
    <property type="protein sequence ID" value="AAC41629.1"/>
    <property type="molecule type" value="mRNA"/>
</dbReference>
<dbReference type="EMBL" id="U89030">
    <property type="protein sequence ID" value="AAB49313.1"/>
    <property type="molecule type" value="mRNA"/>
</dbReference>
<dbReference type="RefSeq" id="NP_001009770.1">
    <property type="nucleotide sequence ID" value="NM_001009770.1"/>
</dbReference>
<dbReference type="SMR" id="P47843"/>
<dbReference type="STRING" id="9940.ENSOARP00000002361"/>
<dbReference type="GlyCosmos" id="P47843">
    <property type="glycosylation" value="1 site, No reported glycans"/>
</dbReference>
<dbReference type="PaxDb" id="9940-ENSOARP00000002361"/>
<dbReference type="Ensembl" id="ENSOART00040050767">
    <property type="protein sequence ID" value="ENSOARP00040026192"/>
    <property type="gene ID" value="ENSOARG00040030510"/>
</dbReference>
<dbReference type="Ensembl" id="ENSOART00215060712">
    <property type="protein sequence ID" value="ENSOARP00215032208"/>
    <property type="gene ID" value="ENSOARG00215036132"/>
</dbReference>
<dbReference type="Ensembl" id="ENSOART00220013066">
    <property type="protein sequence ID" value="ENSOARP00220007470"/>
    <property type="gene ID" value="ENSOARG00220007790"/>
</dbReference>
<dbReference type="GeneID" id="443308"/>
<dbReference type="KEGG" id="oas:443308"/>
<dbReference type="CTD" id="6515"/>
<dbReference type="eggNOG" id="KOG0569">
    <property type="taxonomic scope" value="Eukaryota"/>
</dbReference>
<dbReference type="HOGENOM" id="CLU_001265_30_5_1"/>
<dbReference type="OMA" id="GVFVYYM"/>
<dbReference type="OrthoDB" id="4540492at2759"/>
<dbReference type="Proteomes" id="UP000002356">
    <property type="component" value="Chromosome 3"/>
</dbReference>
<dbReference type="Bgee" id="ENSOARG00000002234">
    <property type="expression patterns" value="Expressed in gastric lymph node and 56 other cell types or tissues"/>
</dbReference>
<dbReference type="GO" id="GO:0042995">
    <property type="term" value="C:cell projection"/>
    <property type="evidence" value="ECO:0007669"/>
    <property type="project" value="UniProtKB-SubCell"/>
</dbReference>
<dbReference type="GO" id="GO:0016020">
    <property type="term" value="C:membrane"/>
    <property type="evidence" value="ECO:0000250"/>
    <property type="project" value="UniProtKB"/>
</dbReference>
<dbReference type="GO" id="GO:0043204">
    <property type="term" value="C:perikaryon"/>
    <property type="evidence" value="ECO:0007669"/>
    <property type="project" value="UniProtKB-SubCell"/>
</dbReference>
<dbReference type="GO" id="GO:0005886">
    <property type="term" value="C:plasma membrane"/>
    <property type="evidence" value="ECO:0000250"/>
    <property type="project" value="UniProtKB"/>
</dbReference>
<dbReference type="GO" id="GO:0005536">
    <property type="term" value="F:D-glucose binding"/>
    <property type="evidence" value="ECO:0000250"/>
    <property type="project" value="UniProtKB"/>
</dbReference>
<dbReference type="GO" id="GO:0055056">
    <property type="term" value="F:D-glucose transmembrane transporter activity"/>
    <property type="evidence" value="ECO:0000250"/>
    <property type="project" value="UniProtKB"/>
</dbReference>
<dbReference type="GO" id="GO:0005354">
    <property type="term" value="F:galactose transmembrane transporter activity"/>
    <property type="evidence" value="ECO:0000250"/>
    <property type="project" value="UniProtKB"/>
</dbReference>
<dbReference type="GO" id="GO:0046323">
    <property type="term" value="P:D-glucose import"/>
    <property type="evidence" value="ECO:0007669"/>
    <property type="project" value="TreeGrafter"/>
</dbReference>
<dbReference type="GO" id="GO:1904659">
    <property type="term" value="P:D-glucose transmembrane transport"/>
    <property type="evidence" value="ECO:0000250"/>
    <property type="project" value="UniProtKB"/>
</dbReference>
<dbReference type="GO" id="GO:0070837">
    <property type="term" value="P:dehydroascorbic acid transport"/>
    <property type="evidence" value="ECO:0007669"/>
    <property type="project" value="TreeGrafter"/>
</dbReference>
<dbReference type="GO" id="GO:0015757">
    <property type="term" value="P:galactose transmembrane transport"/>
    <property type="evidence" value="ECO:0000250"/>
    <property type="project" value="UniProtKB"/>
</dbReference>
<dbReference type="CDD" id="cd17431">
    <property type="entry name" value="MFS_GLUT_Class1"/>
    <property type="match status" value="1"/>
</dbReference>
<dbReference type="FunFam" id="1.20.1250.20:FF:000040">
    <property type="entry name" value="Solute carrier family 2, facilitated glucose transporter member 1"/>
    <property type="match status" value="1"/>
</dbReference>
<dbReference type="Gene3D" id="1.20.1250.20">
    <property type="entry name" value="MFS general substrate transporter like domains"/>
    <property type="match status" value="1"/>
</dbReference>
<dbReference type="InterPro" id="IPR002945">
    <property type="entry name" value="Glc_transpt_3"/>
</dbReference>
<dbReference type="InterPro" id="IPR045263">
    <property type="entry name" value="GLUT"/>
</dbReference>
<dbReference type="InterPro" id="IPR020846">
    <property type="entry name" value="MFS_dom"/>
</dbReference>
<dbReference type="InterPro" id="IPR005828">
    <property type="entry name" value="MFS_sugar_transport-like"/>
</dbReference>
<dbReference type="InterPro" id="IPR036259">
    <property type="entry name" value="MFS_trans_sf"/>
</dbReference>
<dbReference type="InterPro" id="IPR003663">
    <property type="entry name" value="Sugar/inositol_transpt"/>
</dbReference>
<dbReference type="InterPro" id="IPR005829">
    <property type="entry name" value="Sugar_transporter_CS"/>
</dbReference>
<dbReference type="NCBIfam" id="TIGR00879">
    <property type="entry name" value="SP"/>
    <property type="match status" value="1"/>
</dbReference>
<dbReference type="PANTHER" id="PTHR23503">
    <property type="entry name" value="SOLUTE CARRIER FAMILY 2"/>
    <property type="match status" value="1"/>
</dbReference>
<dbReference type="PANTHER" id="PTHR23503:SF99">
    <property type="entry name" value="SOLUTE CARRIER FAMILY 2, FACILITATED GLUCOSE TRANSPORTER MEMBER 3"/>
    <property type="match status" value="1"/>
</dbReference>
<dbReference type="Pfam" id="PF00083">
    <property type="entry name" value="Sugar_tr"/>
    <property type="match status" value="1"/>
</dbReference>
<dbReference type="PRINTS" id="PR01192">
    <property type="entry name" value="GLUCTRSPORT3"/>
</dbReference>
<dbReference type="PRINTS" id="PR00171">
    <property type="entry name" value="SUGRTRNSPORT"/>
</dbReference>
<dbReference type="SUPFAM" id="SSF103473">
    <property type="entry name" value="MFS general substrate transporter"/>
    <property type="match status" value="1"/>
</dbReference>
<dbReference type="PROSITE" id="PS50850">
    <property type="entry name" value="MFS"/>
    <property type="match status" value="1"/>
</dbReference>
<dbReference type="PROSITE" id="PS00216">
    <property type="entry name" value="SUGAR_TRANSPORT_1"/>
    <property type="match status" value="1"/>
</dbReference>
<dbReference type="PROSITE" id="PS00217">
    <property type="entry name" value="SUGAR_TRANSPORT_2"/>
    <property type="match status" value="1"/>
</dbReference>
<comment type="function">
    <text evidence="1 2">Facilitative glucose transporter. Can also mediate the uptake of various other monosaccharides across the cell membrane. Mediates the uptake of glucose, 2-deoxyglucose, galactose, mannose, xylose and fucose, and probably also dehydroascorbate. Does not mediate fructose transport. Required for mesendoderm differentiation (By similarity).</text>
</comment>
<comment type="catalytic activity">
    <reaction evidence="1">
        <text>D-glucose(out) = D-glucose(in)</text>
        <dbReference type="Rhea" id="RHEA:60376"/>
        <dbReference type="ChEBI" id="CHEBI:4167"/>
    </reaction>
</comment>
<comment type="catalytic activity">
    <reaction evidence="1">
        <text>D-galactose(in) = D-galactose(out)</text>
        <dbReference type="Rhea" id="RHEA:34915"/>
        <dbReference type="ChEBI" id="CHEBI:4139"/>
    </reaction>
</comment>
<comment type="activity regulation">
    <text evidence="1">Deoxyglucose transport is inhibited by D-glucose, D-galactose and maltose. Galactose transport is inhibited by D-glucose and maltose.</text>
</comment>
<comment type="subunit">
    <text evidence="2">Interacts with SMIM43; the interaction may promote SLC2A3-mediated glucose transport to meet the energy needs of mesendoderm differentiation.</text>
</comment>
<comment type="subcellular location">
    <subcellularLocation>
        <location evidence="1">Cell membrane</location>
        <topology evidence="1">Multi-pass membrane protein</topology>
    </subcellularLocation>
    <subcellularLocation>
        <location evidence="3">Perikaryon</location>
    </subcellularLocation>
    <subcellularLocation>
        <location evidence="3">Cell projection</location>
    </subcellularLocation>
    <text evidence="3">Localized to densely spaced patches along neuronal processes.</text>
</comment>
<comment type="tissue specificity">
    <text evidence="6">Detected in placenta.</text>
</comment>
<comment type="domain">
    <text evidence="1">Transport is mediated via a series of conformation changes, switching between a conformation where the substrate-binding cavity is accessible from the outside, and a another conformation where it is accessible from the cytoplasm.</text>
</comment>
<comment type="similarity">
    <text evidence="8">Belongs to the major facilitator superfamily. Sugar transporter (TC 2.A.1.1) family. Glucose transporter subfamily.</text>
</comment>
<proteinExistence type="evidence at transcript level"/>